<evidence type="ECO:0000250" key="1">
    <source>
        <dbReference type="UniProtKB" id="P22732"/>
    </source>
</evidence>
<evidence type="ECO:0000250" key="2">
    <source>
        <dbReference type="UniProtKB" id="P43427"/>
    </source>
</evidence>
<evidence type="ECO:0000250" key="3">
    <source>
        <dbReference type="UniProtKB" id="Q9WV38"/>
    </source>
</evidence>
<evidence type="ECO:0000255" key="4"/>
<evidence type="ECO:0000305" key="5"/>
<accession>Q5RET7</accession>
<proteinExistence type="evidence at transcript level"/>
<protein>
    <recommendedName>
        <fullName evidence="5">Solute carrier family 2, facilitated glucose transporter member 5</fullName>
    </recommendedName>
    <alternativeName>
        <fullName evidence="5">Fructose transporter</fullName>
    </alternativeName>
    <alternativeName>
        <fullName evidence="1">Glucose transporter type 5, small intestine</fullName>
        <shortName evidence="1">GLUT-5</shortName>
    </alternativeName>
</protein>
<organism>
    <name type="scientific">Pongo abelii</name>
    <name type="common">Sumatran orangutan</name>
    <name type="synonym">Pongo pygmaeus abelii</name>
    <dbReference type="NCBI Taxonomy" id="9601"/>
    <lineage>
        <taxon>Eukaryota</taxon>
        <taxon>Metazoa</taxon>
        <taxon>Chordata</taxon>
        <taxon>Craniata</taxon>
        <taxon>Vertebrata</taxon>
        <taxon>Euteleostomi</taxon>
        <taxon>Mammalia</taxon>
        <taxon>Eutheria</taxon>
        <taxon>Euarchontoglires</taxon>
        <taxon>Primates</taxon>
        <taxon>Haplorrhini</taxon>
        <taxon>Catarrhini</taxon>
        <taxon>Hominidae</taxon>
        <taxon>Pongo</taxon>
    </lineage>
</organism>
<sequence length="501" mass="54982">MEQQDQSMKEGRLTLVLALATLIAAFGSSFQYGYNVAAVNSPALLMQQFYNETYYGRTGEFMEDFPLTLLWSVTVSMFPFGGFIGSLLVGPLVNKFGRKGALLFNNIFSIVPAILMGCSRVAKSFELIIISRLLVGICAGVSSNVVPMYLGELAPKNLRGALGVVPQLFITVGILVAQIFGLRNLLANVDGWPILLGLTGVPAALQLVLLPFFPESPRYLLIQKKDEAAAKKALQTLRGWDSVDREVAEIRQEDEAEKAAGFISVLKLFRMRSLRWQLLSIIVLMGGQQLSGVNAIYYYADQIYLSAGVPKEHVQFVTAGTGAVNVVMTFCAVFVVELLGRRLLLLLGFSICLVACCVLTAALALQDTVSWMPYISIVCVISYVIGHALGPSPIPALLITEIFLQSSRPSAFMVGGSVHWLSNFTVGLIFPFIQEGLGPYSFIVFAVICLLTTIYIFLIVPETKAKTFIEINQIFTKMNKVSEVYPEKEELKELPPVTLEQ</sequence>
<reference key="1">
    <citation type="submission" date="2004-11" db="EMBL/GenBank/DDBJ databases">
        <authorList>
            <consortium name="The German cDNA consortium"/>
        </authorList>
    </citation>
    <scope>NUCLEOTIDE SEQUENCE [LARGE SCALE MRNA]</scope>
    <source>
        <tissue>Kidney</tissue>
    </source>
</reference>
<keyword id="KW-0007">Acetylation</keyword>
<keyword id="KW-1003">Cell membrane</keyword>
<keyword id="KW-0325">Glycoprotein</keyword>
<keyword id="KW-0472">Membrane</keyword>
<keyword id="KW-1185">Reference proteome</keyword>
<keyword id="KW-0762">Sugar transport</keyword>
<keyword id="KW-0812">Transmembrane</keyword>
<keyword id="KW-1133">Transmembrane helix</keyword>
<keyword id="KW-0813">Transport</keyword>
<name>GTR5_PONAB</name>
<feature type="chain" id="PRO_0000317270" description="Solute carrier family 2, facilitated glucose transporter member 5">
    <location>
        <begin position="1"/>
        <end position="501"/>
    </location>
</feature>
<feature type="topological domain" description="Cytoplasmic" evidence="2">
    <location>
        <begin position="1"/>
        <end position="18"/>
    </location>
</feature>
<feature type="transmembrane region" description="Helical; Name=1" evidence="2">
    <location>
        <begin position="19"/>
        <end position="39"/>
    </location>
</feature>
<feature type="topological domain" description="Extracellular" evidence="2">
    <location>
        <begin position="40"/>
        <end position="68"/>
    </location>
</feature>
<feature type="transmembrane region" description="Helical; Name=2" evidence="2">
    <location>
        <begin position="69"/>
        <end position="91"/>
    </location>
</feature>
<feature type="topological domain" description="Cytoplasmic" evidence="2">
    <location>
        <begin position="92"/>
        <end position="98"/>
    </location>
</feature>
<feature type="transmembrane region" description="Helical; Name=3" evidence="2">
    <location>
        <begin position="99"/>
        <end position="119"/>
    </location>
</feature>
<feature type="topological domain" description="Extracellular" evidence="2">
    <location>
        <begin position="120"/>
        <end position="126"/>
    </location>
</feature>
<feature type="transmembrane region" description="Helical; Name=4" evidence="2">
    <location>
        <begin position="127"/>
        <end position="149"/>
    </location>
</feature>
<feature type="topological domain" description="Cytoplasmic" evidence="2">
    <location>
        <begin position="150"/>
        <end position="161"/>
    </location>
</feature>
<feature type="transmembrane region" description="Helical; Name=5" evidence="2">
    <location>
        <begin position="162"/>
        <end position="182"/>
    </location>
</feature>
<feature type="topological domain" description="Extracellular" evidence="2">
    <location>
        <begin position="183"/>
        <end position="192"/>
    </location>
</feature>
<feature type="transmembrane region" description="Helical; Name=6" evidence="2">
    <location>
        <begin position="193"/>
        <end position="213"/>
    </location>
</feature>
<feature type="topological domain" description="Cytoplasmic" evidence="2">
    <location>
        <begin position="214"/>
        <end position="277"/>
    </location>
</feature>
<feature type="transmembrane region" description="Helical; Name=7" evidence="2">
    <location>
        <begin position="278"/>
        <end position="298"/>
    </location>
</feature>
<feature type="topological domain" description="Extracellular" evidence="2">
    <location>
        <begin position="299"/>
        <end position="313"/>
    </location>
</feature>
<feature type="transmembrane region" description="Helical; Name=8" evidence="2">
    <location>
        <begin position="314"/>
        <end position="334"/>
    </location>
</feature>
<feature type="topological domain" description="Cytoplasmic" evidence="2">
    <location>
        <begin position="335"/>
        <end position="342"/>
    </location>
</feature>
<feature type="transmembrane region" description="Helical; Name=9" evidence="2">
    <location>
        <begin position="343"/>
        <end position="363"/>
    </location>
</feature>
<feature type="topological domain" description="Extracellular" evidence="2">
    <location>
        <begin position="364"/>
        <end position="371"/>
    </location>
</feature>
<feature type="transmembrane region" description="Helical; Name=10" evidence="2">
    <location>
        <begin position="372"/>
        <end position="394"/>
    </location>
</feature>
<feature type="topological domain" description="Cytoplasmic" evidence="2">
    <location>
        <begin position="395"/>
        <end position="412"/>
    </location>
</feature>
<feature type="transmembrane region" description="Helical; Name=11" evidence="2">
    <location>
        <begin position="413"/>
        <end position="433"/>
    </location>
</feature>
<feature type="topological domain" description="Extracellular" evidence="2">
    <location>
        <begin position="434"/>
        <end position="439"/>
    </location>
</feature>
<feature type="transmembrane region" description="Helical; Name=12" evidence="2">
    <location>
        <begin position="440"/>
        <end position="460"/>
    </location>
</feature>
<feature type="topological domain" description="Cytoplasmic" evidence="2">
    <location>
        <begin position="461"/>
        <end position="501"/>
    </location>
</feature>
<feature type="binding site" evidence="2">
    <location>
        <position position="32"/>
    </location>
    <ligand>
        <name>D-fructose</name>
        <dbReference type="ChEBI" id="CHEBI:37721"/>
    </ligand>
</feature>
<feature type="binding site" evidence="2">
    <location>
        <position position="167"/>
    </location>
    <ligand>
        <name>D-fructose</name>
        <dbReference type="ChEBI" id="CHEBI:37721"/>
    </ligand>
</feature>
<feature type="binding site" evidence="2">
    <location>
        <position position="288"/>
    </location>
    <ligand>
        <name>D-fructose</name>
        <dbReference type="ChEBI" id="CHEBI:37721"/>
    </ligand>
</feature>
<feature type="binding site" evidence="2">
    <location>
        <begin position="296"/>
        <end position="298"/>
    </location>
    <ligand>
        <name>D-fructose</name>
        <dbReference type="ChEBI" id="CHEBI:37721"/>
    </ligand>
</feature>
<feature type="binding site" evidence="2">
    <location>
        <position position="387"/>
    </location>
    <ligand>
        <name>D-fructose</name>
        <dbReference type="ChEBI" id="CHEBI:37721"/>
    </ligand>
</feature>
<feature type="binding site" evidence="2">
    <location>
        <begin position="419"/>
        <end position="420"/>
    </location>
    <ligand>
        <name>D-fructose</name>
        <dbReference type="ChEBI" id="CHEBI:37721"/>
    </ligand>
</feature>
<feature type="modified residue" description="N-acetylmethionine" evidence="1">
    <location>
        <position position="1"/>
    </location>
</feature>
<feature type="glycosylation site" description="N-linked (GlcNAc...) asparagine" evidence="4">
    <location>
        <position position="51"/>
    </location>
</feature>
<gene>
    <name evidence="1" type="primary">SLC2A5</name>
</gene>
<comment type="function">
    <text evidence="2 3">Functions as a fructose transporter that has only low activity with other monosaccharides. Can mediate the uptake of deoxyglucose, but with low efficiency. Essential for fructose uptake in the small intestine. Plays a role in the regulation of salt uptake and blood pressure in response to dietary fructose. Required for the development of high blood pressure in response to high dietary fructose intake.</text>
</comment>
<comment type="catalytic activity">
    <reaction evidence="1">
        <text>D-fructose(out) = D-fructose(in)</text>
        <dbReference type="Rhea" id="RHEA:60372"/>
        <dbReference type="ChEBI" id="CHEBI:37721"/>
    </reaction>
</comment>
<comment type="subcellular location">
    <subcellularLocation>
        <location evidence="3">Apical cell membrane</location>
        <topology evidence="3">Multi-pass membrane protein</topology>
    </subcellularLocation>
    <subcellularLocation>
        <location evidence="3">Cell membrane</location>
        <topology evidence="3">Multi-pass membrane protein</topology>
    </subcellularLocation>
    <subcellularLocation>
        <location evidence="2">Cell membrane</location>
        <location evidence="2">Sarcolemma</location>
    </subcellularLocation>
    <text evidence="3">Localized on the apical membrane of jejunum villi, but also on lateral plasma membranes of the villi. Transport to the cell membrane is dependent on RAB11A.</text>
</comment>
<comment type="similarity">
    <text evidence="5">Belongs to the major facilitator superfamily. Sugar transporter (TC 2.A.1.1) family. Glucose transporter subfamily.</text>
</comment>
<dbReference type="EMBL" id="CR857429">
    <property type="protein sequence ID" value="CAH89720.1"/>
    <property type="molecule type" value="mRNA"/>
</dbReference>
<dbReference type="RefSeq" id="NP_001124782.1">
    <property type="nucleotide sequence ID" value="NM_001131310.1"/>
</dbReference>
<dbReference type="SMR" id="Q5RET7"/>
<dbReference type="FunCoup" id="Q5RET7">
    <property type="interactions" value="277"/>
</dbReference>
<dbReference type="STRING" id="9601.ENSPPYP00000002222"/>
<dbReference type="GlyCosmos" id="Q5RET7">
    <property type="glycosylation" value="1 site, No reported glycans"/>
</dbReference>
<dbReference type="GeneID" id="100171635"/>
<dbReference type="KEGG" id="pon:100171635"/>
<dbReference type="CTD" id="6518"/>
<dbReference type="eggNOG" id="KOG0569">
    <property type="taxonomic scope" value="Eukaryota"/>
</dbReference>
<dbReference type="InParanoid" id="Q5RET7"/>
<dbReference type="OrthoDB" id="4540492at2759"/>
<dbReference type="Proteomes" id="UP000001595">
    <property type="component" value="Unplaced"/>
</dbReference>
<dbReference type="GO" id="GO:0016324">
    <property type="term" value="C:apical plasma membrane"/>
    <property type="evidence" value="ECO:0000250"/>
    <property type="project" value="UniProtKB"/>
</dbReference>
<dbReference type="GO" id="GO:0005886">
    <property type="term" value="C:plasma membrane"/>
    <property type="evidence" value="ECO:0000250"/>
    <property type="project" value="UniProtKB"/>
</dbReference>
<dbReference type="GO" id="GO:0042383">
    <property type="term" value="C:sarcolemma"/>
    <property type="evidence" value="ECO:0007669"/>
    <property type="project" value="UniProtKB-SubCell"/>
</dbReference>
<dbReference type="GO" id="GO:0055056">
    <property type="term" value="F:D-glucose transmembrane transporter activity"/>
    <property type="evidence" value="ECO:0007669"/>
    <property type="project" value="TreeGrafter"/>
</dbReference>
<dbReference type="GO" id="GO:0005353">
    <property type="term" value="F:fructose transmembrane transporter activity"/>
    <property type="evidence" value="ECO:0000250"/>
    <property type="project" value="UniProtKB"/>
</dbReference>
<dbReference type="GO" id="GO:0071332">
    <property type="term" value="P:cellular response to fructose stimulus"/>
    <property type="evidence" value="ECO:0000250"/>
    <property type="project" value="UniProtKB"/>
</dbReference>
<dbReference type="GO" id="GO:0046323">
    <property type="term" value="P:D-glucose import"/>
    <property type="evidence" value="ECO:0007669"/>
    <property type="project" value="TreeGrafter"/>
</dbReference>
<dbReference type="GO" id="GO:0070837">
    <property type="term" value="P:dehydroascorbic acid transport"/>
    <property type="evidence" value="ECO:0007669"/>
    <property type="project" value="TreeGrafter"/>
</dbReference>
<dbReference type="CDD" id="cd17432">
    <property type="entry name" value="MFS_GLUT_Class2"/>
    <property type="match status" value="1"/>
</dbReference>
<dbReference type="FunFam" id="1.20.1250.20:FF:001511">
    <property type="entry name" value="Solute carrier family 2, facilitated glucose transporter member 5"/>
    <property type="match status" value="1"/>
</dbReference>
<dbReference type="Gene3D" id="1.20.1250.20">
    <property type="entry name" value="MFS general substrate transporter like domains"/>
    <property type="match status" value="1"/>
</dbReference>
<dbReference type="InterPro" id="IPR002442">
    <property type="entry name" value="Fru_transpt_5"/>
</dbReference>
<dbReference type="InterPro" id="IPR045263">
    <property type="entry name" value="GLUT"/>
</dbReference>
<dbReference type="InterPro" id="IPR020846">
    <property type="entry name" value="MFS_dom"/>
</dbReference>
<dbReference type="InterPro" id="IPR005828">
    <property type="entry name" value="MFS_sugar_transport-like"/>
</dbReference>
<dbReference type="InterPro" id="IPR036259">
    <property type="entry name" value="MFS_trans_sf"/>
</dbReference>
<dbReference type="InterPro" id="IPR003663">
    <property type="entry name" value="Sugar/inositol_transpt"/>
</dbReference>
<dbReference type="InterPro" id="IPR005829">
    <property type="entry name" value="Sugar_transporter_CS"/>
</dbReference>
<dbReference type="NCBIfam" id="TIGR00879">
    <property type="entry name" value="SP"/>
    <property type="match status" value="1"/>
</dbReference>
<dbReference type="PANTHER" id="PTHR23503">
    <property type="entry name" value="SOLUTE CARRIER FAMILY 2"/>
    <property type="match status" value="1"/>
</dbReference>
<dbReference type="PANTHER" id="PTHR23503:SF32">
    <property type="entry name" value="SOLUTE CARRIER FAMILY 2, FACILITATED GLUCOSE TRANSPORTER MEMBER 5"/>
    <property type="match status" value="1"/>
</dbReference>
<dbReference type="Pfam" id="PF00083">
    <property type="entry name" value="Sugar_tr"/>
    <property type="match status" value="1"/>
</dbReference>
<dbReference type="PRINTS" id="PR01194">
    <property type="entry name" value="GLUCTRSPORT5"/>
</dbReference>
<dbReference type="PRINTS" id="PR00171">
    <property type="entry name" value="SUGRTRNSPORT"/>
</dbReference>
<dbReference type="SUPFAM" id="SSF103473">
    <property type="entry name" value="MFS general substrate transporter"/>
    <property type="match status" value="1"/>
</dbReference>
<dbReference type="PROSITE" id="PS50850">
    <property type="entry name" value="MFS"/>
    <property type="match status" value="1"/>
</dbReference>
<dbReference type="PROSITE" id="PS00216">
    <property type="entry name" value="SUGAR_TRANSPORT_1"/>
    <property type="match status" value="1"/>
</dbReference>
<dbReference type="PROSITE" id="PS00217">
    <property type="entry name" value="SUGAR_TRANSPORT_2"/>
    <property type="match status" value="1"/>
</dbReference>